<evidence type="ECO:0000255" key="1">
    <source>
        <dbReference type="HAMAP-Rule" id="MF_00514"/>
    </source>
</evidence>
<evidence type="ECO:0000305" key="2"/>
<protein>
    <recommendedName>
        <fullName evidence="1">Large ribosomal subunit protein bL35</fullName>
    </recommendedName>
    <alternativeName>
        <fullName evidence="2">50S ribosomal protein L35</fullName>
    </alternativeName>
</protein>
<proteinExistence type="inferred from homology"/>
<feature type="chain" id="PRO_1000081628" description="Large ribosomal subunit protein bL35">
    <location>
        <begin position="1"/>
        <end position="64"/>
    </location>
</feature>
<keyword id="KW-1185">Reference proteome</keyword>
<keyword id="KW-0687">Ribonucleoprotein</keyword>
<keyword id="KW-0689">Ribosomal protein</keyword>
<dbReference type="EMBL" id="CP000851">
    <property type="protein sequence ID" value="ABV87581.1"/>
    <property type="molecule type" value="Genomic_DNA"/>
</dbReference>
<dbReference type="RefSeq" id="WP_012155497.1">
    <property type="nucleotide sequence ID" value="NC_009901.1"/>
</dbReference>
<dbReference type="SMR" id="A8H4U4"/>
<dbReference type="STRING" id="398579.Spea_2261"/>
<dbReference type="KEGG" id="spl:Spea_2261"/>
<dbReference type="eggNOG" id="COG0291">
    <property type="taxonomic scope" value="Bacteria"/>
</dbReference>
<dbReference type="HOGENOM" id="CLU_169643_1_1_6"/>
<dbReference type="OrthoDB" id="47476at2"/>
<dbReference type="Proteomes" id="UP000002608">
    <property type="component" value="Chromosome"/>
</dbReference>
<dbReference type="GO" id="GO:0022625">
    <property type="term" value="C:cytosolic large ribosomal subunit"/>
    <property type="evidence" value="ECO:0007669"/>
    <property type="project" value="TreeGrafter"/>
</dbReference>
<dbReference type="GO" id="GO:0003735">
    <property type="term" value="F:structural constituent of ribosome"/>
    <property type="evidence" value="ECO:0007669"/>
    <property type="project" value="InterPro"/>
</dbReference>
<dbReference type="GO" id="GO:0006412">
    <property type="term" value="P:translation"/>
    <property type="evidence" value="ECO:0007669"/>
    <property type="project" value="UniProtKB-UniRule"/>
</dbReference>
<dbReference type="FunFam" id="4.10.410.60:FF:000001">
    <property type="entry name" value="50S ribosomal protein L35"/>
    <property type="match status" value="1"/>
</dbReference>
<dbReference type="Gene3D" id="4.10.410.60">
    <property type="match status" value="1"/>
</dbReference>
<dbReference type="HAMAP" id="MF_00514">
    <property type="entry name" value="Ribosomal_bL35"/>
    <property type="match status" value="1"/>
</dbReference>
<dbReference type="InterPro" id="IPR001706">
    <property type="entry name" value="Ribosomal_bL35"/>
</dbReference>
<dbReference type="InterPro" id="IPR021137">
    <property type="entry name" value="Ribosomal_bL35-like"/>
</dbReference>
<dbReference type="InterPro" id="IPR018265">
    <property type="entry name" value="Ribosomal_bL35_CS"/>
</dbReference>
<dbReference type="InterPro" id="IPR037229">
    <property type="entry name" value="Ribosomal_bL35_sf"/>
</dbReference>
<dbReference type="NCBIfam" id="TIGR00001">
    <property type="entry name" value="rpmI_bact"/>
    <property type="match status" value="1"/>
</dbReference>
<dbReference type="PANTHER" id="PTHR33343">
    <property type="entry name" value="54S RIBOSOMAL PROTEIN BL35M"/>
    <property type="match status" value="1"/>
</dbReference>
<dbReference type="PANTHER" id="PTHR33343:SF1">
    <property type="entry name" value="LARGE RIBOSOMAL SUBUNIT PROTEIN BL35M"/>
    <property type="match status" value="1"/>
</dbReference>
<dbReference type="Pfam" id="PF01632">
    <property type="entry name" value="Ribosomal_L35p"/>
    <property type="match status" value="1"/>
</dbReference>
<dbReference type="PRINTS" id="PR00064">
    <property type="entry name" value="RIBOSOMALL35"/>
</dbReference>
<dbReference type="SUPFAM" id="SSF143034">
    <property type="entry name" value="L35p-like"/>
    <property type="match status" value="1"/>
</dbReference>
<dbReference type="PROSITE" id="PS00936">
    <property type="entry name" value="RIBOSOMAL_L35"/>
    <property type="match status" value="1"/>
</dbReference>
<accession>A8H4U4</accession>
<name>RL35_SHEPA</name>
<organism>
    <name type="scientific">Shewanella pealeana (strain ATCC 700345 / ANG-SQ1)</name>
    <dbReference type="NCBI Taxonomy" id="398579"/>
    <lineage>
        <taxon>Bacteria</taxon>
        <taxon>Pseudomonadati</taxon>
        <taxon>Pseudomonadota</taxon>
        <taxon>Gammaproteobacteria</taxon>
        <taxon>Alteromonadales</taxon>
        <taxon>Shewanellaceae</taxon>
        <taxon>Shewanella</taxon>
    </lineage>
</organism>
<comment type="similarity">
    <text evidence="1">Belongs to the bacterial ribosomal protein bL35 family.</text>
</comment>
<sequence length="64" mass="7455">MPKMKTDKGVQKRFKKTANGFKRKQAHLRHILTKKSTKRKRHLRAKCQVAKSDVPAIARQLPYA</sequence>
<reference key="1">
    <citation type="submission" date="2007-10" db="EMBL/GenBank/DDBJ databases">
        <title>Complete sequence of Shewanella pealeana ATCC 700345.</title>
        <authorList>
            <consortium name="US DOE Joint Genome Institute"/>
            <person name="Copeland A."/>
            <person name="Lucas S."/>
            <person name="Lapidus A."/>
            <person name="Barry K."/>
            <person name="Glavina del Rio T."/>
            <person name="Dalin E."/>
            <person name="Tice H."/>
            <person name="Pitluck S."/>
            <person name="Chertkov O."/>
            <person name="Brettin T."/>
            <person name="Bruce D."/>
            <person name="Detter J.C."/>
            <person name="Han C."/>
            <person name="Schmutz J."/>
            <person name="Larimer F."/>
            <person name="Land M."/>
            <person name="Hauser L."/>
            <person name="Kyrpides N."/>
            <person name="Kim E."/>
            <person name="Zhao J.-S.Z."/>
            <person name="Manno D."/>
            <person name="Hawari J."/>
            <person name="Richardson P."/>
        </authorList>
    </citation>
    <scope>NUCLEOTIDE SEQUENCE [LARGE SCALE GENOMIC DNA]</scope>
    <source>
        <strain>ATCC 700345 / ANG-SQ1</strain>
    </source>
</reference>
<gene>
    <name evidence="1" type="primary">rpmI</name>
    <name type="ordered locus">Spea_2261</name>
</gene>